<accession>Q21755</accession>
<comment type="function">
    <text evidence="1">Negatively regulates nitric oxide production by inducing nitric oxide synthase translocation to actin cytoskeleton and inhibiting its enzymatic activity.</text>
</comment>
<comment type="subcellular location">
    <subcellularLocation>
        <location evidence="1">Cytoplasm</location>
    </subcellularLocation>
    <subcellularLocation>
        <location evidence="1">Nucleus</location>
    </subcellularLocation>
</comment>
<comment type="similarity">
    <text evidence="3">Belongs to the NOSIP family.</text>
</comment>
<organism>
    <name type="scientific">Caenorhabditis elegans</name>
    <dbReference type="NCBI Taxonomy" id="6239"/>
    <lineage>
        <taxon>Eukaryota</taxon>
        <taxon>Metazoa</taxon>
        <taxon>Ecdysozoa</taxon>
        <taxon>Nematoda</taxon>
        <taxon>Chromadorea</taxon>
        <taxon>Rhabditida</taxon>
        <taxon>Rhabditina</taxon>
        <taxon>Rhabditomorpha</taxon>
        <taxon>Rhabditoidea</taxon>
        <taxon>Rhabditidae</taxon>
        <taxon>Peloderinae</taxon>
        <taxon>Caenorhabditis</taxon>
    </lineage>
</organism>
<protein>
    <recommendedName>
        <fullName>Nitric oxide synthase-interacting protein homolog</fullName>
    </recommendedName>
</protein>
<evidence type="ECO:0000250" key="1"/>
<evidence type="ECO:0000256" key="2">
    <source>
        <dbReference type="SAM" id="MobiDB-lite"/>
    </source>
</evidence>
<evidence type="ECO:0000305" key="3"/>
<keyword id="KW-0963">Cytoplasm</keyword>
<keyword id="KW-0539">Nucleus</keyword>
<keyword id="KW-1185">Reference proteome</keyword>
<gene>
    <name type="ORF">R05G6.4</name>
</gene>
<name>NOSIP_CAEEL</name>
<feature type="chain" id="PRO_0000280591" description="Nitric oxide synthase-interacting protein homolog">
    <location>
        <begin position="1"/>
        <end position="310"/>
    </location>
</feature>
<feature type="region of interest" description="Disordered" evidence="2">
    <location>
        <begin position="115"/>
        <end position="141"/>
    </location>
</feature>
<feature type="compositionally biased region" description="Polar residues" evidence="2">
    <location>
        <begin position="115"/>
        <end position="124"/>
    </location>
</feature>
<proteinExistence type="inferred from homology"/>
<reference key="1">
    <citation type="journal article" date="1998" name="Science">
        <title>Genome sequence of the nematode C. elegans: a platform for investigating biology.</title>
        <authorList>
            <consortium name="The C. elegans sequencing consortium"/>
        </authorList>
    </citation>
    <scope>NUCLEOTIDE SEQUENCE [LARGE SCALE GENOMIC DNA]</scope>
    <source>
        <strain>Bristol N2</strain>
    </source>
</reference>
<sequence>MTRHGKNSTAASVYTYHERRRDAKASGYGTLHARLGADSIKEFHCCSLTLQPCRNPVISPTGYIFDREAILENILAQKKAYAKKLKEYEKQVAEESAAAKIAEGQAETFTKRTQFSAIESTPSRTGAVATPRPEVGSLKRQGGVMSTEIAAKVKAHGEEGVMSNMKGDKSTSLPSFWIPELNPTAVATKLEKPSSKVLCPVSGKPIKLKELLEVKFTPMPGTETAAHRKFLCPVTRDELTNTTRCAYLKKSKSVVKYDVVEKLIKGDGIDPINGEPMSEDDIIELQRGGTGYSATNETKAKLIRPQLELQ</sequence>
<dbReference type="EMBL" id="FO081426">
    <property type="protein sequence ID" value="CCD71554.1"/>
    <property type="molecule type" value="Genomic_DNA"/>
</dbReference>
<dbReference type="PIR" id="T29358">
    <property type="entry name" value="T29358"/>
</dbReference>
<dbReference type="RefSeq" id="NP_501214.1">
    <property type="nucleotide sequence ID" value="NM_068813.10"/>
</dbReference>
<dbReference type="SMR" id="Q21755"/>
<dbReference type="BioGRID" id="42644">
    <property type="interactions" value="3"/>
</dbReference>
<dbReference type="FunCoup" id="Q21755">
    <property type="interactions" value="2785"/>
</dbReference>
<dbReference type="STRING" id="6239.R05G6.4.1"/>
<dbReference type="PaxDb" id="6239-R05G6.4"/>
<dbReference type="PeptideAtlas" id="Q21755"/>
<dbReference type="EnsemblMetazoa" id="R05G6.4.1">
    <property type="protein sequence ID" value="R05G6.4.1"/>
    <property type="gene ID" value="WBGene00019898"/>
</dbReference>
<dbReference type="GeneID" id="177526"/>
<dbReference type="KEGG" id="cel:CELE_R05G6.4"/>
<dbReference type="UCSC" id="R05G6.4">
    <property type="organism name" value="c. elegans"/>
</dbReference>
<dbReference type="AGR" id="WB:WBGene00019898"/>
<dbReference type="CTD" id="177526"/>
<dbReference type="WormBase" id="R05G6.4">
    <property type="protein sequence ID" value="CE07417"/>
    <property type="gene ID" value="WBGene00019898"/>
</dbReference>
<dbReference type="eggNOG" id="KOG3039">
    <property type="taxonomic scope" value="Eukaryota"/>
</dbReference>
<dbReference type="GeneTree" id="ENSGT00390000015505"/>
<dbReference type="HOGENOM" id="CLU_053742_0_0_1"/>
<dbReference type="InParanoid" id="Q21755"/>
<dbReference type="OMA" id="PCVTKFM"/>
<dbReference type="OrthoDB" id="116827at2759"/>
<dbReference type="PhylomeDB" id="Q21755"/>
<dbReference type="PRO" id="PR:Q21755"/>
<dbReference type="Proteomes" id="UP000001940">
    <property type="component" value="Chromosome IV"/>
</dbReference>
<dbReference type="Bgee" id="WBGene00019898">
    <property type="expression patterns" value="Expressed in germ line (C elegans) and 4 other cell types or tissues"/>
</dbReference>
<dbReference type="GO" id="GO:0005737">
    <property type="term" value="C:cytoplasm"/>
    <property type="evidence" value="ECO:0007669"/>
    <property type="project" value="UniProtKB-SubCell"/>
</dbReference>
<dbReference type="GO" id="GO:0005634">
    <property type="term" value="C:nucleus"/>
    <property type="evidence" value="ECO:0000318"/>
    <property type="project" value="GO_Central"/>
</dbReference>
<dbReference type="GO" id="GO:0061630">
    <property type="term" value="F:ubiquitin protein ligase activity"/>
    <property type="evidence" value="ECO:0007669"/>
    <property type="project" value="InterPro"/>
</dbReference>
<dbReference type="CDD" id="cd16661">
    <property type="entry name" value="RING-Ubox1_NOSIP"/>
    <property type="match status" value="1"/>
</dbReference>
<dbReference type="CDD" id="cd16662">
    <property type="entry name" value="RING-Ubox2_NOSIP"/>
    <property type="match status" value="1"/>
</dbReference>
<dbReference type="FunFam" id="3.30.40.10:FF:000601">
    <property type="entry name" value="Nitric oxide synthase-interacting protein homolog"/>
    <property type="match status" value="1"/>
</dbReference>
<dbReference type="FunFam" id="3.30.40.10:FF:000027">
    <property type="entry name" value="Pre-mRNA-processing factor 19, putative"/>
    <property type="match status" value="1"/>
</dbReference>
<dbReference type="Gene3D" id="3.30.40.10">
    <property type="entry name" value="Zinc/RING finger domain, C3HC4 (zinc finger)"/>
    <property type="match status" value="2"/>
</dbReference>
<dbReference type="InterPro" id="IPR016818">
    <property type="entry name" value="NOSIP"/>
</dbReference>
<dbReference type="InterPro" id="IPR031790">
    <property type="entry name" value="Znf-NOSIP"/>
</dbReference>
<dbReference type="InterPro" id="IPR013083">
    <property type="entry name" value="Znf_RING/FYVE/PHD"/>
</dbReference>
<dbReference type="PANTHER" id="PTHR13063">
    <property type="entry name" value="ENOS INTERACTING PROTEIN"/>
    <property type="match status" value="1"/>
</dbReference>
<dbReference type="PANTHER" id="PTHR13063:SF10">
    <property type="entry name" value="NITRIC OXIDE SYNTHASE-INTERACTING PROTEIN"/>
    <property type="match status" value="1"/>
</dbReference>
<dbReference type="Pfam" id="PF15906">
    <property type="entry name" value="zf-NOSIP"/>
    <property type="match status" value="1"/>
</dbReference>
<dbReference type="PIRSF" id="PIRSF023577">
    <property type="entry name" value="ENOS_interacting"/>
    <property type="match status" value="1"/>
</dbReference>
<dbReference type="SUPFAM" id="SSF57850">
    <property type="entry name" value="RING/U-box"/>
    <property type="match status" value="2"/>
</dbReference>